<sequence length="328" mass="35923">MLSQVRVAVTQAEPVWLDLEATVKKTCDLIAEAAANGAQLVTFPECWIPGYPAWIWARPVDMRLSSIYIQNSLKIDSPQMASIQQCAAENKIVVVLGFSENLHNSLYISQAIIASDGKILTTRKKIKPTHMERTIFGDSFGDCLQSVVDTSAGRVGALSCWEHIQPLLKYHTYAQREQIHVAAWPPLFPHSEDGSLFSMSTEGTSSIARTYAIESQSFVLHTTTVIGQSGIDRMATSTGALMSTPGGGCSAIFGPDGRQLSQPIPSAEEGIIYADLDFEHIYHSKAFVDVCGHYSRPDLLWLGVEGGVKRHVRDNATTATPQVEQQEE</sequence>
<name>NIT2_ASPNC</name>
<feature type="chain" id="PRO_0000432174" description="Arylacetonitrilase">
    <location>
        <begin position="1"/>
        <end position="328"/>
    </location>
</feature>
<feature type="domain" description="CN hydrolase" evidence="1">
    <location>
        <begin position="5"/>
        <end position="278"/>
    </location>
</feature>
<feature type="active site" description="Proton acceptor" evidence="1">
    <location>
        <position position="45"/>
    </location>
</feature>
<feature type="active site" evidence="1">
    <location>
        <position position="125"/>
    </location>
</feature>
<feature type="active site" description="Nucleophile" evidence="1">
    <location>
        <position position="160"/>
    </location>
</feature>
<gene>
    <name type="ORF">An18g01740</name>
</gene>
<comment type="function">
    <text evidence="2">Nitrilase that hydrolyzes preferentially phenylacetonitrile, (R,S)-mandelonitrile, and 3-indolylacetonitrile.</text>
</comment>
<comment type="catalytic activity">
    <reaction evidence="2">
        <text>a nitrile + 2 H2O = a carboxylate + NH4(+)</text>
        <dbReference type="Rhea" id="RHEA:21724"/>
        <dbReference type="ChEBI" id="CHEBI:15377"/>
        <dbReference type="ChEBI" id="CHEBI:18379"/>
        <dbReference type="ChEBI" id="CHEBI:28938"/>
        <dbReference type="ChEBI" id="CHEBI:29067"/>
        <dbReference type="EC" id="3.5.5.1"/>
    </reaction>
</comment>
<comment type="catalytic activity">
    <reaction evidence="2">
        <text>4-chlorophenylacetonitrile + 2 H2O = 4-chlorophenylacetate + NH4(+)</text>
        <dbReference type="Rhea" id="RHEA:20657"/>
        <dbReference type="ChEBI" id="CHEBI:15377"/>
        <dbReference type="ChEBI" id="CHEBI:16237"/>
        <dbReference type="ChEBI" id="CHEBI:17346"/>
        <dbReference type="ChEBI" id="CHEBI:28938"/>
        <dbReference type="EC" id="3.5.5.5"/>
    </reaction>
</comment>
<comment type="similarity">
    <text evidence="4">Belongs to the carbon-nitrogen hydrolase superfamily. Nitrilase family.</text>
</comment>
<protein>
    <recommendedName>
        <fullName evidence="3">Arylacetonitrilase</fullName>
        <ecNumber evidence="2">3.5.5.1</ecNumber>
        <ecNumber evidence="2">3.5.5.5</ecNumber>
    </recommendedName>
    <alternativeName>
        <fullName evidence="3">NitAn2</fullName>
    </alternativeName>
</protein>
<organism>
    <name type="scientific">Aspergillus niger (strain ATCC MYA-4892 / CBS 513.88 / FGSC A1513)</name>
    <dbReference type="NCBI Taxonomy" id="425011"/>
    <lineage>
        <taxon>Eukaryota</taxon>
        <taxon>Fungi</taxon>
        <taxon>Dikarya</taxon>
        <taxon>Ascomycota</taxon>
        <taxon>Pezizomycotina</taxon>
        <taxon>Eurotiomycetes</taxon>
        <taxon>Eurotiomycetidae</taxon>
        <taxon>Eurotiales</taxon>
        <taxon>Aspergillaceae</taxon>
        <taxon>Aspergillus</taxon>
        <taxon>Aspergillus subgen. Circumdati</taxon>
    </lineage>
</organism>
<proteinExistence type="evidence at protein level"/>
<reference key="1">
    <citation type="journal article" date="2007" name="Nat. Biotechnol.">
        <title>Genome sequencing and analysis of the versatile cell factory Aspergillus niger CBS 513.88.</title>
        <authorList>
            <person name="Pel H.J."/>
            <person name="de Winde J.H."/>
            <person name="Archer D.B."/>
            <person name="Dyer P.S."/>
            <person name="Hofmann G."/>
            <person name="Schaap P.J."/>
            <person name="Turner G."/>
            <person name="de Vries R.P."/>
            <person name="Albang R."/>
            <person name="Albermann K."/>
            <person name="Andersen M.R."/>
            <person name="Bendtsen J.D."/>
            <person name="Benen J.A.E."/>
            <person name="van den Berg M."/>
            <person name="Breestraat S."/>
            <person name="Caddick M.X."/>
            <person name="Contreras R."/>
            <person name="Cornell M."/>
            <person name="Coutinho P.M."/>
            <person name="Danchin E.G.J."/>
            <person name="Debets A.J.M."/>
            <person name="Dekker P."/>
            <person name="van Dijck P.W.M."/>
            <person name="van Dijk A."/>
            <person name="Dijkhuizen L."/>
            <person name="Driessen A.J.M."/>
            <person name="d'Enfert C."/>
            <person name="Geysens S."/>
            <person name="Goosen C."/>
            <person name="Groot G.S.P."/>
            <person name="de Groot P.W.J."/>
            <person name="Guillemette T."/>
            <person name="Henrissat B."/>
            <person name="Herweijer M."/>
            <person name="van den Hombergh J.P.T.W."/>
            <person name="van den Hondel C.A.M.J.J."/>
            <person name="van der Heijden R.T.J.M."/>
            <person name="van der Kaaij R.M."/>
            <person name="Klis F.M."/>
            <person name="Kools H.J."/>
            <person name="Kubicek C.P."/>
            <person name="van Kuyk P.A."/>
            <person name="Lauber J."/>
            <person name="Lu X."/>
            <person name="van der Maarel M.J.E.C."/>
            <person name="Meulenberg R."/>
            <person name="Menke H."/>
            <person name="Mortimer M.A."/>
            <person name="Nielsen J."/>
            <person name="Oliver S.G."/>
            <person name="Olsthoorn M."/>
            <person name="Pal K."/>
            <person name="van Peij N.N.M.E."/>
            <person name="Ram A.F.J."/>
            <person name="Rinas U."/>
            <person name="Roubos J.A."/>
            <person name="Sagt C.M.J."/>
            <person name="Schmoll M."/>
            <person name="Sun J."/>
            <person name="Ussery D."/>
            <person name="Varga J."/>
            <person name="Vervecken W."/>
            <person name="van de Vondervoort P.J.J."/>
            <person name="Wedler H."/>
            <person name="Woesten H.A.B."/>
            <person name="Zeng A.-P."/>
            <person name="van Ooyen A.J.J."/>
            <person name="Visser J."/>
            <person name="Stam H."/>
        </authorList>
    </citation>
    <scope>NUCLEOTIDE SEQUENCE [LARGE SCALE GENOMIC DNA]</scope>
    <source>
        <strain>ATCC MYA-4892 / CBS 513.88 / FGSC A1513</strain>
    </source>
</reference>
<reference key="2">
    <citation type="journal article" date="2013" name="Mol. Biotechnol.">
        <title>A comparative study of nitrilases identified by genome mining.</title>
        <authorList>
            <person name="Kaplan O."/>
            <person name="Vesela A.B."/>
            <person name="Petrickova A."/>
            <person name="Pasquarelli F."/>
            <person name="Picmanova M."/>
            <person name="Rinagelova A."/>
            <person name="Bhalla T.C."/>
            <person name="Patek M."/>
            <person name="Martinkova L."/>
        </authorList>
    </citation>
    <scope>FUNCTION</scope>
    <scope>CATALYTIC ACTIVITY</scope>
</reference>
<keyword id="KW-0378">Hydrolase</keyword>
<keyword id="KW-1185">Reference proteome</keyword>
<dbReference type="EC" id="3.5.5.1" evidence="2"/>
<dbReference type="EC" id="3.5.5.5" evidence="2"/>
<dbReference type="EMBL" id="AM270398">
    <property type="protein sequence ID" value="CAK47246.1"/>
    <property type="molecule type" value="Genomic_DNA"/>
</dbReference>
<dbReference type="RefSeq" id="XP_001398633.1">
    <property type="nucleotide sequence ID" value="XM_001398596.2"/>
</dbReference>
<dbReference type="SMR" id="A2RA31"/>
<dbReference type="EnsemblFungi" id="CAK47246">
    <property type="protein sequence ID" value="CAK47246"/>
    <property type="gene ID" value="An18g01740"/>
</dbReference>
<dbReference type="GeneID" id="4989734"/>
<dbReference type="KEGG" id="ang:An18g01740"/>
<dbReference type="VEuPathDB" id="FungiDB:An18g01740"/>
<dbReference type="HOGENOM" id="CLU_030130_6_0_1"/>
<dbReference type="Proteomes" id="UP000006706">
    <property type="component" value="Chromosome 8L"/>
</dbReference>
<dbReference type="GO" id="GO:0047428">
    <property type="term" value="F:arylacetonitrilase activity"/>
    <property type="evidence" value="ECO:0007669"/>
    <property type="project" value="UniProtKB-EC"/>
</dbReference>
<dbReference type="GO" id="GO:0016836">
    <property type="term" value="F:hydro-lyase activity"/>
    <property type="evidence" value="ECO:0007669"/>
    <property type="project" value="UniProtKB-ARBA"/>
</dbReference>
<dbReference type="CDD" id="cd07564">
    <property type="entry name" value="nitrilases_CHs"/>
    <property type="match status" value="1"/>
</dbReference>
<dbReference type="FunFam" id="3.60.110.10:FF:000011">
    <property type="entry name" value="Cyanide hydratase"/>
    <property type="match status" value="1"/>
</dbReference>
<dbReference type="Gene3D" id="3.60.110.10">
    <property type="entry name" value="Carbon-nitrogen hydrolase"/>
    <property type="match status" value="1"/>
</dbReference>
<dbReference type="InterPro" id="IPR003010">
    <property type="entry name" value="C-N_Hydrolase"/>
</dbReference>
<dbReference type="InterPro" id="IPR036526">
    <property type="entry name" value="C-N_Hydrolase_sf"/>
</dbReference>
<dbReference type="InterPro" id="IPR000132">
    <property type="entry name" value="Nitrilase/CN_hydratase_CS"/>
</dbReference>
<dbReference type="InterPro" id="IPR044149">
    <property type="entry name" value="Nitrilases_CHs"/>
</dbReference>
<dbReference type="PANTHER" id="PTHR46044:SF14">
    <property type="entry name" value="ARYLACETONITRILASE"/>
    <property type="match status" value="1"/>
</dbReference>
<dbReference type="PANTHER" id="PTHR46044">
    <property type="entry name" value="NITRILASE"/>
    <property type="match status" value="1"/>
</dbReference>
<dbReference type="Pfam" id="PF00795">
    <property type="entry name" value="CN_hydrolase"/>
    <property type="match status" value="1"/>
</dbReference>
<dbReference type="SUPFAM" id="SSF56317">
    <property type="entry name" value="Carbon-nitrogen hydrolase"/>
    <property type="match status" value="1"/>
</dbReference>
<dbReference type="PROSITE" id="PS50263">
    <property type="entry name" value="CN_HYDROLASE"/>
    <property type="match status" value="1"/>
</dbReference>
<dbReference type="PROSITE" id="PS00920">
    <property type="entry name" value="NITRIL_CHT_1"/>
    <property type="match status" value="1"/>
</dbReference>
<dbReference type="PROSITE" id="PS00921">
    <property type="entry name" value="NITRIL_CHT_2"/>
    <property type="match status" value="1"/>
</dbReference>
<accession>A2RA31</accession>
<evidence type="ECO:0000255" key="1">
    <source>
        <dbReference type="PROSITE-ProRule" id="PRU00054"/>
    </source>
</evidence>
<evidence type="ECO:0000269" key="2">
    <source>
    </source>
</evidence>
<evidence type="ECO:0000303" key="3">
    <source>
    </source>
</evidence>
<evidence type="ECO:0000305" key="4"/>